<protein>
    <recommendedName>
        <fullName evidence="4">Antitoxin EndoAI</fullName>
    </recommendedName>
    <alternativeName>
        <fullName>Antitoxin MazE-bs</fullName>
        <shortName>MazE-bs</shortName>
    </alternativeName>
    <alternativeName>
        <fullName>EndoA inhibitor</fullName>
    </alternativeName>
</protein>
<comment type="function">
    <text evidence="1 2 3">Antitoxin component of a type II toxin-antitoxin (TA) system. Antitoxin that directly inhibits activity of EndoA in vitro. Upon expression in E.coli counteracts inhibitory effect of endoribonuclease EndoA. The EndoA-EndoAI complex does not seem to bind its own promoter (PubMed:24120662).</text>
</comment>
<comment type="subunit">
    <text evidence="1 3">Homodimer, forms a heterohexamer composed of alternating toxin and antitoxin homodimers which inhibits the toxin's endoribonuclease activity. Antitoxin prevents RNA binding to the endoribonuclease (PubMed:24120662).</text>
</comment>
<comment type="interaction">
    <interactant intactId="EBI-7370294">
        <id>P96621</id>
    </interactant>
    <interactant intactId="EBI-7370294">
        <id>P96621</id>
        <label>ndoAI</label>
    </interactant>
    <organismsDiffer>false</organismsDiffer>
    <experiments>2</experiments>
</comment>
<comment type="similarity">
    <text evidence="5">Belongs to the MazE/EndoAI family.</text>
</comment>
<name>ENDAI_BACSU</name>
<accession>P96621</accession>
<accession>Q797K5</accession>
<gene>
    <name evidence="4" type="primary">ndoAI</name>
    <name type="synonym">mazE</name>
    <name type="ordered locus">BSU04650</name>
</gene>
<evidence type="ECO:0000269" key="1">
    <source>
    </source>
</evidence>
<evidence type="ECO:0000269" key="2">
    <source>
    </source>
</evidence>
<evidence type="ECO:0000269" key="3">
    <source>
    </source>
</evidence>
<evidence type="ECO:0000303" key="4">
    <source>
    </source>
</evidence>
<evidence type="ECO:0000305" key="5"/>
<evidence type="ECO:0007829" key="6">
    <source>
        <dbReference type="PDB" id="4ME7"/>
    </source>
</evidence>
<organism>
    <name type="scientific">Bacillus subtilis (strain 168)</name>
    <dbReference type="NCBI Taxonomy" id="224308"/>
    <lineage>
        <taxon>Bacteria</taxon>
        <taxon>Bacillati</taxon>
        <taxon>Bacillota</taxon>
        <taxon>Bacilli</taxon>
        <taxon>Bacillales</taxon>
        <taxon>Bacillaceae</taxon>
        <taxon>Bacillus</taxon>
    </lineage>
</organism>
<dbReference type="EMBL" id="AB001488">
    <property type="protein sequence ID" value="BAA19302.1"/>
    <property type="molecule type" value="Genomic_DNA"/>
</dbReference>
<dbReference type="EMBL" id="AL009126">
    <property type="protein sequence ID" value="CAB12272.1"/>
    <property type="molecule type" value="Genomic_DNA"/>
</dbReference>
<dbReference type="PIR" id="B69773">
    <property type="entry name" value="B69773"/>
</dbReference>
<dbReference type="RefSeq" id="NP_388346.1">
    <property type="nucleotide sequence ID" value="NC_000964.3"/>
</dbReference>
<dbReference type="PDB" id="4ME7">
    <property type="method" value="X-ray"/>
    <property type="resolution" value="2.92 A"/>
    <property type="chains" value="E/F=2-93"/>
</dbReference>
<dbReference type="PDBsum" id="4ME7"/>
<dbReference type="SMR" id="P96621"/>
<dbReference type="FunCoup" id="P96621">
    <property type="interactions" value="77"/>
</dbReference>
<dbReference type="MINT" id="P96621"/>
<dbReference type="STRING" id="224308.BSU04650"/>
<dbReference type="PaxDb" id="224308-BSU04650"/>
<dbReference type="EnsemblBacteria" id="CAB12272">
    <property type="protein sequence ID" value="CAB12272"/>
    <property type="gene ID" value="BSU_04650"/>
</dbReference>
<dbReference type="GeneID" id="938177"/>
<dbReference type="KEGG" id="bsu:BSU04650"/>
<dbReference type="PATRIC" id="fig|224308.179.peg.493"/>
<dbReference type="eggNOG" id="COG0864">
    <property type="taxonomic scope" value="Bacteria"/>
</dbReference>
<dbReference type="InParanoid" id="P96621"/>
<dbReference type="OrthoDB" id="1634058at2"/>
<dbReference type="PhylomeDB" id="P96621"/>
<dbReference type="BioCyc" id="BSUB:BSU04650-MONOMER"/>
<dbReference type="EvolutionaryTrace" id="P96621"/>
<dbReference type="PRO" id="PR:P96621"/>
<dbReference type="Proteomes" id="UP000001570">
    <property type="component" value="Chromosome"/>
</dbReference>
<dbReference type="GO" id="GO:0042802">
    <property type="term" value="F:identical protein binding"/>
    <property type="evidence" value="ECO:0000353"/>
    <property type="project" value="IntAct"/>
</dbReference>
<dbReference type="GO" id="GO:0006355">
    <property type="term" value="P:regulation of DNA-templated transcription"/>
    <property type="evidence" value="ECO:0007669"/>
    <property type="project" value="InterPro"/>
</dbReference>
<dbReference type="CDD" id="cd22231">
    <property type="entry name" value="RHH_NikR_HicB-like"/>
    <property type="match status" value="1"/>
</dbReference>
<dbReference type="Gene3D" id="1.10.1220.10">
    <property type="entry name" value="Met repressor-like"/>
    <property type="match status" value="1"/>
</dbReference>
<dbReference type="InterPro" id="IPR013321">
    <property type="entry name" value="Arc_rbn_hlx_hlx"/>
</dbReference>
<dbReference type="InterPro" id="IPR002145">
    <property type="entry name" value="CopG"/>
</dbReference>
<dbReference type="InterPro" id="IPR010985">
    <property type="entry name" value="Ribbon_hlx_hlx"/>
</dbReference>
<dbReference type="Pfam" id="PF01402">
    <property type="entry name" value="RHH_1"/>
    <property type="match status" value="1"/>
</dbReference>
<dbReference type="SUPFAM" id="SSF47598">
    <property type="entry name" value="Ribbon-helix-helix"/>
    <property type="match status" value="1"/>
</dbReference>
<reference key="1">
    <citation type="submission" date="1997-03" db="EMBL/GenBank/DDBJ databases">
        <title>A 148 kbp sequence of the region between 35 and 47 degree of the Bacillus subtilis genome.</title>
        <authorList>
            <person name="Kasahara Y."/>
            <person name="Nakai S."/>
            <person name="Lee S."/>
            <person name="Sadaie Y."/>
            <person name="Ogasawara N."/>
        </authorList>
    </citation>
    <scope>NUCLEOTIDE SEQUENCE [GENOMIC DNA]</scope>
    <source>
        <strain>168</strain>
    </source>
</reference>
<reference key="2">
    <citation type="journal article" date="1997" name="Nature">
        <title>The complete genome sequence of the Gram-positive bacterium Bacillus subtilis.</title>
        <authorList>
            <person name="Kunst F."/>
            <person name="Ogasawara N."/>
            <person name="Moszer I."/>
            <person name="Albertini A.M."/>
            <person name="Alloni G."/>
            <person name="Azevedo V."/>
            <person name="Bertero M.G."/>
            <person name="Bessieres P."/>
            <person name="Bolotin A."/>
            <person name="Borchert S."/>
            <person name="Borriss R."/>
            <person name="Boursier L."/>
            <person name="Brans A."/>
            <person name="Braun M."/>
            <person name="Brignell S.C."/>
            <person name="Bron S."/>
            <person name="Brouillet S."/>
            <person name="Bruschi C.V."/>
            <person name="Caldwell B."/>
            <person name="Capuano V."/>
            <person name="Carter N.M."/>
            <person name="Choi S.-K."/>
            <person name="Codani J.-J."/>
            <person name="Connerton I.F."/>
            <person name="Cummings N.J."/>
            <person name="Daniel R.A."/>
            <person name="Denizot F."/>
            <person name="Devine K.M."/>
            <person name="Duesterhoeft A."/>
            <person name="Ehrlich S.D."/>
            <person name="Emmerson P.T."/>
            <person name="Entian K.-D."/>
            <person name="Errington J."/>
            <person name="Fabret C."/>
            <person name="Ferrari E."/>
            <person name="Foulger D."/>
            <person name="Fritz C."/>
            <person name="Fujita M."/>
            <person name="Fujita Y."/>
            <person name="Fuma S."/>
            <person name="Galizzi A."/>
            <person name="Galleron N."/>
            <person name="Ghim S.-Y."/>
            <person name="Glaser P."/>
            <person name="Goffeau A."/>
            <person name="Golightly E.J."/>
            <person name="Grandi G."/>
            <person name="Guiseppi G."/>
            <person name="Guy B.J."/>
            <person name="Haga K."/>
            <person name="Haiech J."/>
            <person name="Harwood C.R."/>
            <person name="Henaut A."/>
            <person name="Hilbert H."/>
            <person name="Holsappel S."/>
            <person name="Hosono S."/>
            <person name="Hullo M.-F."/>
            <person name="Itaya M."/>
            <person name="Jones L.-M."/>
            <person name="Joris B."/>
            <person name="Karamata D."/>
            <person name="Kasahara Y."/>
            <person name="Klaerr-Blanchard M."/>
            <person name="Klein C."/>
            <person name="Kobayashi Y."/>
            <person name="Koetter P."/>
            <person name="Koningstein G."/>
            <person name="Krogh S."/>
            <person name="Kumano M."/>
            <person name="Kurita K."/>
            <person name="Lapidus A."/>
            <person name="Lardinois S."/>
            <person name="Lauber J."/>
            <person name="Lazarevic V."/>
            <person name="Lee S.-M."/>
            <person name="Levine A."/>
            <person name="Liu H."/>
            <person name="Masuda S."/>
            <person name="Mauel C."/>
            <person name="Medigue C."/>
            <person name="Medina N."/>
            <person name="Mellado R.P."/>
            <person name="Mizuno M."/>
            <person name="Moestl D."/>
            <person name="Nakai S."/>
            <person name="Noback M."/>
            <person name="Noone D."/>
            <person name="O'Reilly M."/>
            <person name="Ogawa K."/>
            <person name="Ogiwara A."/>
            <person name="Oudega B."/>
            <person name="Park S.-H."/>
            <person name="Parro V."/>
            <person name="Pohl T.M."/>
            <person name="Portetelle D."/>
            <person name="Porwollik S."/>
            <person name="Prescott A.M."/>
            <person name="Presecan E."/>
            <person name="Pujic P."/>
            <person name="Purnelle B."/>
            <person name="Rapoport G."/>
            <person name="Rey M."/>
            <person name="Reynolds S."/>
            <person name="Rieger M."/>
            <person name="Rivolta C."/>
            <person name="Rocha E."/>
            <person name="Roche B."/>
            <person name="Rose M."/>
            <person name="Sadaie Y."/>
            <person name="Sato T."/>
            <person name="Scanlan E."/>
            <person name="Schleich S."/>
            <person name="Schroeter R."/>
            <person name="Scoffone F."/>
            <person name="Sekiguchi J."/>
            <person name="Sekowska A."/>
            <person name="Seror S.J."/>
            <person name="Serror P."/>
            <person name="Shin B.-S."/>
            <person name="Soldo B."/>
            <person name="Sorokin A."/>
            <person name="Tacconi E."/>
            <person name="Takagi T."/>
            <person name="Takahashi H."/>
            <person name="Takemaru K."/>
            <person name="Takeuchi M."/>
            <person name="Tamakoshi A."/>
            <person name="Tanaka T."/>
            <person name="Terpstra P."/>
            <person name="Tognoni A."/>
            <person name="Tosato V."/>
            <person name="Uchiyama S."/>
            <person name="Vandenbol M."/>
            <person name="Vannier F."/>
            <person name="Vassarotti A."/>
            <person name="Viari A."/>
            <person name="Wambutt R."/>
            <person name="Wedler E."/>
            <person name="Wedler H."/>
            <person name="Weitzenegger T."/>
            <person name="Winters P."/>
            <person name="Wipat A."/>
            <person name="Yamamoto H."/>
            <person name="Yamane K."/>
            <person name="Yasumoto K."/>
            <person name="Yata K."/>
            <person name="Yoshida K."/>
            <person name="Yoshikawa H.-F."/>
            <person name="Zumstein E."/>
            <person name="Yoshikawa H."/>
            <person name="Danchin A."/>
        </authorList>
    </citation>
    <scope>NUCLEOTIDE SEQUENCE [LARGE SCALE GENOMIC DNA]</scope>
    <source>
        <strain>168</strain>
    </source>
</reference>
<reference key="3">
    <citation type="journal article" date="2005" name="Mol. Microbiol.">
        <title>The Bacillus subtilis ydcDE operon encodes an endoribonuclease of the MazF/PemK family and its inhibitor.</title>
        <authorList>
            <person name="Pellegrini O."/>
            <person name="Mathy N."/>
            <person name="Gogos A."/>
            <person name="Shapiro L."/>
            <person name="Condon C."/>
        </authorList>
    </citation>
    <scope>FUNCTION AS AN ANTITOXIN</scope>
    <scope>SUBUNIT</scope>
    <scope>EXPRESSION IN E.COLI</scope>
    <source>
        <strain>168</strain>
    </source>
</reference>
<reference key="4">
    <citation type="journal article" date="2011" name="FEBS Lett.">
        <title>Bacillus subtilis MazF-bs (EndoA) is a UACAU-specific mRNA interferase.</title>
        <authorList>
            <person name="Park J.H."/>
            <person name="Yamaguchi Y."/>
            <person name="Inouye M."/>
        </authorList>
    </citation>
    <scope>FUNCTION AS AN ANTITOXIN</scope>
    <scope>EXPRESSION IN E.COLI</scope>
    <source>
        <strain>168</strain>
    </source>
</reference>
<reference key="5">
    <citation type="journal article" date="2013" name="Mol. Cell">
        <title>Structural basis of mRNA recognition and cleavage by toxin MazF and its regulation by antitoxin MazE in Bacillus subtilis.</title>
        <authorList>
            <person name="Simanshu D.K."/>
            <person name="Yamaguchi Y."/>
            <person name="Park J.H."/>
            <person name="Inouye M."/>
            <person name="Patel D.J."/>
        </authorList>
    </citation>
    <scope>X-RAY CRYSTALLOGRAPHY (2.92 ANGSTROMS) OF 2-93 IN COMPLEX WITH MAZF</scope>
    <scope>FUNCTION</scope>
    <scope>SUBUNIT</scope>
    <scope>MUTAGENESIS OF TYR-61; MET-64; ASN-68; SER-72; GLU-74 AND GLU-79</scope>
    <source>
        <strain>168</strain>
    </source>
</reference>
<feature type="chain" id="PRO_0000086974" description="Antitoxin EndoAI">
    <location>
        <begin position="1"/>
        <end position="93"/>
    </location>
</feature>
<feature type="mutagenesis site" description="No longer prevents EndoA toxicity upon coexpression in E.coli, due to loss of EndoA-EndoAI interaction." evidence="3">
    <original>Y</original>
    <variation>A</variation>
    <location>
        <position position="61"/>
    </location>
</feature>
<feature type="mutagenesis site" description="Still prevents EndoA toxicity upon coexpression in E.coli." evidence="3">
    <original>M</original>
    <variation>A</variation>
    <location>
        <position position="64"/>
    </location>
</feature>
<feature type="mutagenesis site" description="Still prevents EndoA toxicity upon coexpression in E.coli." evidence="3">
    <original>N</original>
    <variation>A</variation>
    <location>
        <position position="68"/>
    </location>
</feature>
<feature type="mutagenesis site" description="Still prevents EndoA toxicity upon coexpression in E.coli." evidence="3">
    <original>S</original>
    <variation>A</variation>
    <location>
        <position position="72"/>
    </location>
</feature>
<feature type="mutagenesis site" description="Still prevents EndoA toxicity upon coexpression in E.coli." evidence="3">
    <original>E</original>
    <variation>A</variation>
    <location>
        <position position="74"/>
    </location>
</feature>
<feature type="mutagenesis site" description="Still prevents EndoA toxicity upon coexpression in E.coli." evidence="3">
    <original>E</original>
    <variation>A</variation>
    <location>
        <position position="79"/>
    </location>
</feature>
<feature type="strand" evidence="6">
    <location>
        <begin position="10"/>
        <end position="13"/>
    </location>
</feature>
<feature type="helix" evidence="6">
    <location>
        <begin position="16"/>
        <end position="29"/>
    </location>
</feature>
<feature type="helix" evidence="6">
    <location>
        <begin position="33"/>
        <end position="74"/>
    </location>
</feature>
<feature type="helix" evidence="6">
    <location>
        <begin position="76"/>
        <end position="81"/>
    </location>
</feature>
<proteinExistence type="evidence at protein level"/>
<keyword id="KW-0002">3D-structure</keyword>
<keyword id="KW-1185">Reference proteome</keyword>
<keyword id="KW-1277">Toxin-antitoxin system</keyword>
<sequence>MSESSARTEMKISLPENLVAELDGVAMREKRSRNELISQAVRAYVSERTTRHNRDLMRRGYMEMAKINLNISSEAHFAECEAETTVERLVSGG</sequence>